<proteinExistence type="inferred from homology"/>
<feature type="chain" id="PRO_1000144866" description="Probable lipid kinase YegS">
    <location>
        <begin position="1"/>
        <end position="299"/>
    </location>
</feature>
<feature type="domain" description="DAGKc" evidence="1">
    <location>
        <begin position="2"/>
        <end position="133"/>
    </location>
</feature>
<feature type="active site" description="Proton acceptor" evidence="1">
    <location>
        <position position="271"/>
    </location>
</feature>
<feature type="binding site" evidence="1">
    <location>
        <position position="40"/>
    </location>
    <ligand>
        <name>ATP</name>
        <dbReference type="ChEBI" id="CHEBI:30616"/>
    </ligand>
</feature>
<feature type="binding site" evidence="1">
    <location>
        <begin position="66"/>
        <end position="72"/>
    </location>
    <ligand>
        <name>ATP</name>
        <dbReference type="ChEBI" id="CHEBI:30616"/>
    </ligand>
</feature>
<feature type="binding site" evidence="1">
    <location>
        <position position="95"/>
    </location>
    <ligand>
        <name>ATP</name>
        <dbReference type="ChEBI" id="CHEBI:30616"/>
    </ligand>
</feature>
<feature type="binding site" evidence="1">
    <location>
        <position position="215"/>
    </location>
    <ligand>
        <name>Mg(2+)</name>
        <dbReference type="ChEBI" id="CHEBI:18420"/>
    </ligand>
</feature>
<feature type="binding site" evidence="1">
    <location>
        <position position="218"/>
    </location>
    <ligand>
        <name>Mg(2+)</name>
        <dbReference type="ChEBI" id="CHEBI:18420"/>
    </ligand>
</feature>
<feature type="binding site" evidence="1">
    <location>
        <position position="220"/>
    </location>
    <ligand>
        <name>Mg(2+)</name>
        <dbReference type="ChEBI" id="CHEBI:18420"/>
    </ligand>
</feature>
<name>YEGS_ECODH</name>
<accession>B1X7I0</accession>
<evidence type="ECO:0000255" key="1">
    <source>
        <dbReference type="HAMAP-Rule" id="MF_01377"/>
    </source>
</evidence>
<protein>
    <recommendedName>
        <fullName evidence="1">Probable lipid kinase YegS</fullName>
        <ecNumber evidence="1">2.7.1.-</ecNumber>
    </recommendedName>
</protein>
<keyword id="KW-0067">ATP-binding</keyword>
<keyword id="KW-0963">Cytoplasm</keyword>
<keyword id="KW-0418">Kinase</keyword>
<keyword id="KW-0444">Lipid biosynthesis</keyword>
<keyword id="KW-0443">Lipid metabolism</keyword>
<keyword id="KW-0460">Magnesium</keyword>
<keyword id="KW-0479">Metal-binding</keyword>
<keyword id="KW-0547">Nucleotide-binding</keyword>
<keyword id="KW-0594">Phospholipid biosynthesis</keyword>
<keyword id="KW-1208">Phospholipid metabolism</keyword>
<keyword id="KW-0808">Transferase</keyword>
<sequence>MAEFPASLLILNGKSTDNLPLREAIMLLREEGMTIHVRVTWEKGDAARYVEEARKFGVATVIAGGGDGTINEVSTALIQCEGDDIPALGILPLGTANDFATSVGIPEALDKALKLAIAGDAIAIDMAQVNKQTCFINMATGGFGTRITTETPEKLKAALGSVSYIIHGLMRMDTLQPDRCEIRGENFHWQGDALVIGIGNGRQAGGGQQLCPNALINDGLLQLRIFTGDEILPALVSTLKSDEDNPNIIEGASSWFDIQAPHDITFNLDGEPLSGQNFHIEILPAALRCRLPPDCPLLR</sequence>
<dbReference type="EC" id="2.7.1.-" evidence="1"/>
<dbReference type="EMBL" id="CP000948">
    <property type="protein sequence ID" value="ACB03256.1"/>
    <property type="molecule type" value="Genomic_DNA"/>
</dbReference>
<dbReference type="RefSeq" id="WP_000807348.1">
    <property type="nucleotide sequence ID" value="NC_010473.1"/>
</dbReference>
<dbReference type="SMR" id="B1X7I0"/>
<dbReference type="KEGG" id="ecd:ECDH10B_2238"/>
<dbReference type="HOGENOM" id="CLU_045532_1_1_6"/>
<dbReference type="GO" id="GO:0005737">
    <property type="term" value="C:cytoplasm"/>
    <property type="evidence" value="ECO:0007669"/>
    <property type="project" value="UniProtKB-SubCell"/>
</dbReference>
<dbReference type="GO" id="GO:0005886">
    <property type="term" value="C:plasma membrane"/>
    <property type="evidence" value="ECO:0007669"/>
    <property type="project" value="TreeGrafter"/>
</dbReference>
<dbReference type="GO" id="GO:0005524">
    <property type="term" value="F:ATP binding"/>
    <property type="evidence" value="ECO:0007669"/>
    <property type="project" value="UniProtKB-UniRule"/>
</dbReference>
<dbReference type="GO" id="GO:0001727">
    <property type="term" value="F:lipid kinase activity"/>
    <property type="evidence" value="ECO:0007669"/>
    <property type="project" value="UniProtKB-UniRule"/>
</dbReference>
<dbReference type="GO" id="GO:0000287">
    <property type="term" value="F:magnesium ion binding"/>
    <property type="evidence" value="ECO:0007669"/>
    <property type="project" value="UniProtKB-UniRule"/>
</dbReference>
<dbReference type="GO" id="GO:0008654">
    <property type="term" value="P:phospholipid biosynthetic process"/>
    <property type="evidence" value="ECO:0007669"/>
    <property type="project" value="UniProtKB-UniRule"/>
</dbReference>
<dbReference type="FunFam" id="2.60.200.40:FF:000008">
    <property type="entry name" value="Probable lipid kinase YegS"/>
    <property type="match status" value="1"/>
</dbReference>
<dbReference type="FunFam" id="3.40.50.10330:FF:000008">
    <property type="entry name" value="Probable lipid kinase YegS"/>
    <property type="match status" value="1"/>
</dbReference>
<dbReference type="Gene3D" id="2.60.200.40">
    <property type="match status" value="1"/>
</dbReference>
<dbReference type="Gene3D" id="3.40.50.10330">
    <property type="entry name" value="Probable inorganic polyphosphate/atp-NAD kinase, domain 1"/>
    <property type="match status" value="1"/>
</dbReference>
<dbReference type="HAMAP" id="MF_01377">
    <property type="entry name" value="YegS"/>
    <property type="match status" value="1"/>
</dbReference>
<dbReference type="InterPro" id="IPR017438">
    <property type="entry name" value="ATP-NAD_kinase_N"/>
</dbReference>
<dbReference type="InterPro" id="IPR005218">
    <property type="entry name" value="Diacylglycerol/lipid_kinase"/>
</dbReference>
<dbReference type="InterPro" id="IPR001206">
    <property type="entry name" value="Diacylglycerol_kinase_cat_dom"/>
</dbReference>
<dbReference type="InterPro" id="IPR022433">
    <property type="entry name" value="Lip_kinase_YegS"/>
</dbReference>
<dbReference type="InterPro" id="IPR050187">
    <property type="entry name" value="Lipid_Phosphate_FormReg"/>
</dbReference>
<dbReference type="InterPro" id="IPR016064">
    <property type="entry name" value="NAD/diacylglycerol_kinase_sf"/>
</dbReference>
<dbReference type="InterPro" id="IPR045540">
    <property type="entry name" value="YegS/DAGK_C"/>
</dbReference>
<dbReference type="NCBIfam" id="TIGR03702">
    <property type="entry name" value="lip_kinase_YegS"/>
    <property type="match status" value="1"/>
</dbReference>
<dbReference type="NCBIfam" id="NF009602">
    <property type="entry name" value="PRK13054.1"/>
    <property type="match status" value="1"/>
</dbReference>
<dbReference type="NCBIfam" id="TIGR00147">
    <property type="entry name" value="YegS/Rv2252/BmrU family lipid kinase"/>
    <property type="match status" value="1"/>
</dbReference>
<dbReference type="PANTHER" id="PTHR12358:SF106">
    <property type="entry name" value="LIPID KINASE YEGS"/>
    <property type="match status" value="1"/>
</dbReference>
<dbReference type="PANTHER" id="PTHR12358">
    <property type="entry name" value="SPHINGOSINE KINASE"/>
    <property type="match status" value="1"/>
</dbReference>
<dbReference type="Pfam" id="PF00781">
    <property type="entry name" value="DAGK_cat"/>
    <property type="match status" value="1"/>
</dbReference>
<dbReference type="Pfam" id="PF19279">
    <property type="entry name" value="YegS_C"/>
    <property type="match status" value="1"/>
</dbReference>
<dbReference type="SMART" id="SM00046">
    <property type="entry name" value="DAGKc"/>
    <property type="match status" value="1"/>
</dbReference>
<dbReference type="SUPFAM" id="SSF111331">
    <property type="entry name" value="NAD kinase/diacylglycerol kinase-like"/>
    <property type="match status" value="1"/>
</dbReference>
<dbReference type="PROSITE" id="PS50146">
    <property type="entry name" value="DAGK"/>
    <property type="match status" value="1"/>
</dbReference>
<gene>
    <name evidence="1" type="primary">yegS</name>
    <name type="ordered locus">ECDH10B_2238</name>
</gene>
<comment type="function">
    <text evidence="1">Probably phosphorylates lipids; the in vivo substrate is unknown.</text>
</comment>
<comment type="cofactor">
    <cofactor evidence="1">
        <name>Mg(2+)</name>
        <dbReference type="ChEBI" id="CHEBI:18420"/>
    </cofactor>
    <cofactor evidence="1">
        <name>Ca(2+)</name>
        <dbReference type="ChEBI" id="CHEBI:29108"/>
    </cofactor>
    <text evidence="1">Binds 1 Mg(2+) ion per subunit. Ca(2+) may be able to substitute.</text>
</comment>
<comment type="subcellular location">
    <subcellularLocation>
        <location evidence="1">Cytoplasm</location>
    </subcellularLocation>
</comment>
<comment type="similarity">
    <text evidence="1">Belongs to the diacylglycerol/lipid kinase family. YegS lipid kinase subfamily.</text>
</comment>
<reference key="1">
    <citation type="journal article" date="2008" name="J. Bacteriol.">
        <title>The complete genome sequence of Escherichia coli DH10B: insights into the biology of a laboratory workhorse.</title>
        <authorList>
            <person name="Durfee T."/>
            <person name="Nelson R."/>
            <person name="Baldwin S."/>
            <person name="Plunkett G. III"/>
            <person name="Burland V."/>
            <person name="Mau B."/>
            <person name="Petrosino J.F."/>
            <person name="Qin X."/>
            <person name="Muzny D.M."/>
            <person name="Ayele M."/>
            <person name="Gibbs R.A."/>
            <person name="Csorgo B."/>
            <person name="Posfai G."/>
            <person name="Weinstock G.M."/>
            <person name="Blattner F.R."/>
        </authorList>
    </citation>
    <scope>NUCLEOTIDE SEQUENCE [LARGE SCALE GENOMIC DNA]</scope>
    <source>
        <strain>K12 / DH10B</strain>
    </source>
</reference>
<organism>
    <name type="scientific">Escherichia coli (strain K12 / DH10B)</name>
    <dbReference type="NCBI Taxonomy" id="316385"/>
    <lineage>
        <taxon>Bacteria</taxon>
        <taxon>Pseudomonadati</taxon>
        <taxon>Pseudomonadota</taxon>
        <taxon>Gammaproteobacteria</taxon>
        <taxon>Enterobacterales</taxon>
        <taxon>Enterobacteriaceae</taxon>
        <taxon>Escherichia</taxon>
    </lineage>
</organism>